<accession>Q0TCF7</accession>
<evidence type="ECO:0000255" key="1">
    <source>
        <dbReference type="HAMAP-Rule" id="MF_01337"/>
    </source>
</evidence>
<evidence type="ECO:0000305" key="2"/>
<comment type="function">
    <text evidence="1">This is one of the proteins that bind and probably mediate the attachment of the 5S RNA into the large ribosomal subunit, where it forms part of the central protuberance.</text>
</comment>
<comment type="subunit">
    <text evidence="1">Part of the 50S ribosomal subunit; part of the 5S rRNA/L5/L18/L25 subcomplex. Contacts the 5S and 23S rRNAs.</text>
</comment>
<comment type="similarity">
    <text evidence="1">Belongs to the universal ribosomal protein uL18 family.</text>
</comment>
<proteinExistence type="inferred from homology"/>
<dbReference type="EMBL" id="CP000247">
    <property type="protein sequence ID" value="ABG71372.1"/>
    <property type="molecule type" value="Genomic_DNA"/>
</dbReference>
<dbReference type="RefSeq" id="WP_000358960.1">
    <property type="nucleotide sequence ID" value="NC_008253.1"/>
</dbReference>
<dbReference type="SMR" id="Q0TCF7"/>
<dbReference type="GeneID" id="98390426"/>
<dbReference type="KEGG" id="ecp:ECP_3392"/>
<dbReference type="HOGENOM" id="CLU_098841_0_1_6"/>
<dbReference type="Proteomes" id="UP000009182">
    <property type="component" value="Chromosome"/>
</dbReference>
<dbReference type="GO" id="GO:0022625">
    <property type="term" value="C:cytosolic large ribosomal subunit"/>
    <property type="evidence" value="ECO:0007669"/>
    <property type="project" value="TreeGrafter"/>
</dbReference>
<dbReference type="GO" id="GO:0008097">
    <property type="term" value="F:5S rRNA binding"/>
    <property type="evidence" value="ECO:0007669"/>
    <property type="project" value="TreeGrafter"/>
</dbReference>
<dbReference type="GO" id="GO:0003735">
    <property type="term" value="F:structural constituent of ribosome"/>
    <property type="evidence" value="ECO:0007669"/>
    <property type="project" value="InterPro"/>
</dbReference>
<dbReference type="GO" id="GO:0006412">
    <property type="term" value="P:translation"/>
    <property type="evidence" value="ECO:0007669"/>
    <property type="project" value="UniProtKB-UniRule"/>
</dbReference>
<dbReference type="CDD" id="cd00432">
    <property type="entry name" value="Ribosomal_L18_L5e"/>
    <property type="match status" value="1"/>
</dbReference>
<dbReference type="FunFam" id="3.30.420.100:FF:000001">
    <property type="entry name" value="50S ribosomal protein L18"/>
    <property type="match status" value="1"/>
</dbReference>
<dbReference type="Gene3D" id="3.30.420.100">
    <property type="match status" value="1"/>
</dbReference>
<dbReference type="HAMAP" id="MF_01337_B">
    <property type="entry name" value="Ribosomal_uL18_B"/>
    <property type="match status" value="1"/>
</dbReference>
<dbReference type="InterPro" id="IPR004389">
    <property type="entry name" value="Ribosomal_uL18_bac-type"/>
</dbReference>
<dbReference type="InterPro" id="IPR005484">
    <property type="entry name" value="Ribosomal_uL18_bac/euk"/>
</dbReference>
<dbReference type="NCBIfam" id="TIGR00060">
    <property type="entry name" value="L18_bact"/>
    <property type="match status" value="1"/>
</dbReference>
<dbReference type="PANTHER" id="PTHR12899">
    <property type="entry name" value="39S RIBOSOMAL PROTEIN L18, MITOCHONDRIAL"/>
    <property type="match status" value="1"/>
</dbReference>
<dbReference type="PANTHER" id="PTHR12899:SF3">
    <property type="entry name" value="LARGE RIBOSOMAL SUBUNIT PROTEIN UL18M"/>
    <property type="match status" value="1"/>
</dbReference>
<dbReference type="Pfam" id="PF00861">
    <property type="entry name" value="Ribosomal_L18p"/>
    <property type="match status" value="1"/>
</dbReference>
<dbReference type="SUPFAM" id="SSF53137">
    <property type="entry name" value="Translational machinery components"/>
    <property type="match status" value="1"/>
</dbReference>
<keyword id="KW-0687">Ribonucleoprotein</keyword>
<keyword id="KW-0689">Ribosomal protein</keyword>
<keyword id="KW-0694">RNA-binding</keyword>
<keyword id="KW-0699">rRNA-binding</keyword>
<name>RL18_ECOL5</name>
<protein>
    <recommendedName>
        <fullName evidence="1">Large ribosomal subunit protein uL18</fullName>
    </recommendedName>
    <alternativeName>
        <fullName evidence="2">50S ribosomal protein L18</fullName>
    </alternativeName>
</protein>
<organism>
    <name type="scientific">Escherichia coli O6:K15:H31 (strain 536 / UPEC)</name>
    <dbReference type="NCBI Taxonomy" id="362663"/>
    <lineage>
        <taxon>Bacteria</taxon>
        <taxon>Pseudomonadati</taxon>
        <taxon>Pseudomonadota</taxon>
        <taxon>Gammaproteobacteria</taxon>
        <taxon>Enterobacterales</taxon>
        <taxon>Enterobacteriaceae</taxon>
        <taxon>Escherichia</taxon>
    </lineage>
</organism>
<reference key="1">
    <citation type="journal article" date="2006" name="Mol. Microbiol.">
        <title>Role of pathogenicity island-associated integrases in the genome plasticity of uropathogenic Escherichia coli strain 536.</title>
        <authorList>
            <person name="Hochhut B."/>
            <person name="Wilde C."/>
            <person name="Balling G."/>
            <person name="Middendorf B."/>
            <person name="Dobrindt U."/>
            <person name="Brzuszkiewicz E."/>
            <person name="Gottschalk G."/>
            <person name="Carniel E."/>
            <person name="Hacker J."/>
        </authorList>
    </citation>
    <scope>NUCLEOTIDE SEQUENCE [LARGE SCALE GENOMIC DNA]</scope>
    <source>
        <strain>536 / UPEC</strain>
    </source>
</reference>
<feature type="chain" id="PRO_0000251313" description="Large ribosomal subunit protein uL18">
    <location>
        <begin position="1"/>
        <end position="117"/>
    </location>
</feature>
<gene>
    <name evidence="1" type="primary">rplR</name>
    <name type="ordered locus">ECP_3392</name>
</gene>
<sequence length="117" mass="12770">MDKKSARIRRATRARRKLQELGATRLVVHRTPRHIYAQVIAPNGSEVLVAASTVEKAIAEQLKYTGNKDAAAAVGKAVAERALEKGIKDVSFDRSGFQYHGRVQALADAAREAGLQF</sequence>